<dbReference type="EC" id="4.3.1.7" evidence="1"/>
<dbReference type="EMBL" id="AE016853">
    <property type="protein sequence ID" value="AAO54268.1"/>
    <property type="molecule type" value="Genomic_DNA"/>
</dbReference>
<dbReference type="RefSeq" id="NP_790573.1">
    <property type="nucleotide sequence ID" value="NC_004578.1"/>
</dbReference>
<dbReference type="RefSeq" id="WP_005770129.1">
    <property type="nucleotide sequence ID" value="NC_004578.1"/>
</dbReference>
<dbReference type="SMR" id="Q889M3"/>
<dbReference type="STRING" id="223283.PSPTO_0726"/>
<dbReference type="DNASU" id="1182346"/>
<dbReference type="GeneID" id="1182346"/>
<dbReference type="KEGG" id="pst:PSPTO_0726"/>
<dbReference type="PATRIC" id="fig|223283.9.peg.734"/>
<dbReference type="eggNOG" id="COG4302">
    <property type="taxonomic scope" value="Bacteria"/>
</dbReference>
<dbReference type="HOGENOM" id="CLU_068224_1_0_6"/>
<dbReference type="OrthoDB" id="114248at2"/>
<dbReference type="PhylomeDB" id="Q889M3"/>
<dbReference type="UniPathway" id="UPA00560"/>
<dbReference type="Proteomes" id="UP000002515">
    <property type="component" value="Chromosome"/>
</dbReference>
<dbReference type="GO" id="GO:0009350">
    <property type="term" value="C:ethanolamine ammonia-lyase complex"/>
    <property type="evidence" value="ECO:0007669"/>
    <property type="project" value="UniProtKB-UniRule"/>
</dbReference>
<dbReference type="GO" id="GO:0031471">
    <property type="term" value="C:ethanolamine degradation polyhedral organelle"/>
    <property type="evidence" value="ECO:0007669"/>
    <property type="project" value="UniProtKB-UniRule"/>
</dbReference>
<dbReference type="GO" id="GO:0031419">
    <property type="term" value="F:cobalamin binding"/>
    <property type="evidence" value="ECO:0007669"/>
    <property type="project" value="UniProtKB-UniRule"/>
</dbReference>
<dbReference type="GO" id="GO:0008851">
    <property type="term" value="F:ethanolamine ammonia-lyase activity"/>
    <property type="evidence" value="ECO:0007669"/>
    <property type="project" value="UniProtKB-UniRule"/>
</dbReference>
<dbReference type="GO" id="GO:0006520">
    <property type="term" value="P:amino acid metabolic process"/>
    <property type="evidence" value="ECO:0007669"/>
    <property type="project" value="InterPro"/>
</dbReference>
<dbReference type="GO" id="GO:0046336">
    <property type="term" value="P:ethanolamine catabolic process"/>
    <property type="evidence" value="ECO:0007669"/>
    <property type="project" value="UniProtKB-UniRule"/>
</dbReference>
<dbReference type="FunFam" id="1.10.30.40:FF:000001">
    <property type="entry name" value="Ethanolamine ammonia-lyase light chain"/>
    <property type="match status" value="1"/>
</dbReference>
<dbReference type="FunFam" id="3.40.50.11240:FF:000001">
    <property type="entry name" value="Ethanolamine ammonia-lyase light chain"/>
    <property type="match status" value="1"/>
</dbReference>
<dbReference type="Gene3D" id="3.40.50.11240">
    <property type="entry name" value="Ethanolamine ammonia-lyase light chain (EutC)"/>
    <property type="match status" value="1"/>
</dbReference>
<dbReference type="Gene3D" id="1.10.30.40">
    <property type="entry name" value="Ethanolamine ammonia-lyase light chain (EutC), N-terminal domain"/>
    <property type="match status" value="1"/>
</dbReference>
<dbReference type="HAMAP" id="MF_00601">
    <property type="entry name" value="EutC"/>
    <property type="match status" value="1"/>
</dbReference>
<dbReference type="InterPro" id="IPR009246">
    <property type="entry name" value="EutC"/>
</dbReference>
<dbReference type="InterPro" id="IPR042251">
    <property type="entry name" value="EutC_C"/>
</dbReference>
<dbReference type="InterPro" id="IPR042255">
    <property type="entry name" value="EutC_N"/>
</dbReference>
<dbReference type="NCBIfam" id="NF003971">
    <property type="entry name" value="PRK05465.1"/>
    <property type="match status" value="1"/>
</dbReference>
<dbReference type="PANTHER" id="PTHR39330">
    <property type="entry name" value="ETHANOLAMINE AMMONIA-LYASE LIGHT CHAIN"/>
    <property type="match status" value="1"/>
</dbReference>
<dbReference type="PANTHER" id="PTHR39330:SF1">
    <property type="entry name" value="ETHANOLAMINE AMMONIA-LYASE SMALL SUBUNIT"/>
    <property type="match status" value="1"/>
</dbReference>
<dbReference type="Pfam" id="PF05985">
    <property type="entry name" value="EutC"/>
    <property type="match status" value="1"/>
</dbReference>
<dbReference type="PIRSF" id="PIRSF018982">
    <property type="entry name" value="EutC"/>
    <property type="match status" value="1"/>
</dbReference>
<sequence length="287" mass="31009">MSDQPMNEVQDNAAPANPWLELRRLTPARIALGRTGTSLPTCAQLDFQAAHAQARDAVHLAFDHAAISAQLAEKGRETILLHSAAADRDSYLQRPDLGRRLNDESAQTLRDYAAAHPGGLDLAVVVADGLSALAVHRHAVPFLTRLEEQASAEGWTLSPVLMVEQGRVAVADEIGELLGAKMVVILIGERPGLSSPDSLGLYFTYAPKVGLNDAHRNCISNVRLEGLSYAMAAHRLLYLMREACKRQISGVSLKDEAQLNTLESDDSAENSDRKIGNFLLDGPAVPH</sequence>
<gene>
    <name evidence="1" type="primary">eutC</name>
    <name type="ordered locus">PSPTO_0726</name>
</gene>
<reference key="1">
    <citation type="journal article" date="2003" name="Proc. Natl. Acad. Sci. U.S.A.">
        <title>The complete genome sequence of the Arabidopsis and tomato pathogen Pseudomonas syringae pv. tomato DC3000.</title>
        <authorList>
            <person name="Buell C.R."/>
            <person name="Joardar V."/>
            <person name="Lindeberg M."/>
            <person name="Selengut J."/>
            <person name="Paulsen I.T."/>
            <person name="Gwinn M.L."/>
            <person name="Dodson R.J."/>
            <person name="DeBoy R.T."/>
            <person name="Durkin A.S."/>
            <person name="Kolonay J.F."/>
            <person name="Madupu R."/>
            <person name="Daugherty S.C."/>
            <person name="Brinkac L.M."/>
            <person name="Beanan M.J."/>
            <person name="Haft D.H."/>
            <person name="Nelson W.C."/>
            <person name="Davidsen T.M."/>
            <person name="Zafar N."/>
            <person name="Zhou L."/>
            <person name="Liu J."/>
            <person name="Yuan Q."/>
            <person name="Khouri H.M."/>
            <person name="Fedorova N.B."/>
            <person name="Tran B."/>
            <person name="Russell D."/>
            <person name="Berry K.J."/>
            <person name="Utterback T.R."/>
            <person name="Van Aken S.E."/>
            <person name="Feldblyum T.V."/>
            <person name="D'Ascenzo M."/>
            <person name="Deng W.-L."/>
            <person name="Ramos A.R."/>
            <person name="Alfano J.R."/>
            <person name="Cartinhour S."/>
            <person name="Chatterjee A.K."/>
            <person name="Delaney T.P."/>
            <person name="Lazarowitz S.G."/>
            <person name="Martin G.B."/>
            <person name="Schneider D.J."/>
            <person name="Tang X."/>
            <person name="Bender C.L."/>
            <person name="White O."/>
            <person name="Fraser C.M."/>
            <person name="Collmer A."/>
        </authorList>
    </citation>
    <scope>NUCLEOTIDE SEQUENCE [LARGE SCALE GENOMIC DNA]</scope>
    <source>
        <strain>ATCC BAA-871 / DC3000</strain>
    </source>
</reference>
<keyword id="KW-1283">Bacterial microcompartment</keyword>
<keyword id="KW-0846">Cobalamin</keyword>
<keyword id="KW-0170">Cobalt</keyword>
<keyword id="KW-0456">Lyase</keyword>
<keyword id="KW-1185">Reference proteome</keyword>
<protein>
    <recommendedName>
        <fullName evidence="1">Ethanolamine ammonia-lyase small subunit</fullName>
        <shortName evidence="1">EAL small subunit</shortName>
        <ecNumber evidence="1">4.3.1.7</ecNumber>
    </recommendedName>
</protein>
<name>EUTC_PSESM</name>
<accession>Q889M3</accession>
<proteinExistence type="inferred from homology"/>
<evidence type="ECO:0000255" key="1">
    <source>
        <dbReference type="HAMAP-Rule" id="MF_00601"/>
    </source>
</evidence>
<feature type="chain" id="PRO_0000205999" description="Ethanolamine ammonia-lyase small subunit">
    <location>
        <begin position="1"/>
        <end position="287"/>
    </location>
</feature>
<feature type="binding site" evidence="1">
    <location>
        <position position="168"/>
    </location>
    <ligand>
        <name>adenosylcob(III)alamin</name>
        <dbReference type="ChEBI" id="CHEBI:18408"/>
    </ligand>
</feature>
<feature type="binding site" evidence="1">
    <location>
        <position position="189"/>
    </location>
    <ligand>
        <name>adenosylcob(III)alamin</name>
        <dbReference type="ChEBI" id="CHEBI:18408"/>
    </ligand>
</feature>
<feature type="binding site" evidence="1">
    <location>
        <position position="218"/>
    </location>
    <ligand>
        <name>adenosylcob(III)alamin</name>
        <dbReference type="ChEBI" id="CHEBI:18408"/>
    </ligand>
</feature>
<comment type="function">
    <text evidence="1">Catalyzes the deamination of various vicinal amino-alcohols to oxo compounds. Allows this organism to utilize ethanolamine as the sole source of nitrogen and carbon in the presence of external vitamin B12.</text>
</comment>
<comment type="catalytic activity">
    <reaction evidence="1">
        <text>ethanolamine = acetaldehyde + NH4(+)</text>
        <dbReference type="Rhea" id="RHEA:15313"/>
        <dbReference type="ChEBI" id="CHEBI:15343"/>
        <dbReference type="ChEBI" id="CHEBI:28938"/>
        <dbReference type="ChEBI" id="CHEBI:57603"/>
        <dbReference type="EC" id="4.3.1.7"/>
    </reaction>
</comment>
<comment type="cofactor">
    <cofactor evidence="1">
        <name>adenosylcob(III)alamin</name>
        <dbReference type="ChEBI" id="CHEBI:18408"/>
    </cofactor>
    <text evidence="1">Binds between the large and small subunits.</text>
</comment>
<comment type="pathway">
    <text evidence="1">Amine and polyamine degradation; ethanolamine degradation.</text>
</comment>
<comment type="subunit">
    <text evidence="1">The basic unit is a heterodimer which dimerizes to form tetramers. The heterotetramers trimerize; 6 large subunits form a core ring with 6 small subunits projecting outwards.</text>
</comment>
<comment type="subcellular location">
    <subcellularLocation>
        <location evidence="1">Bacterial microcompartment</location>
    </subcellularLocation>
</comment>
<comment type="similarity">
    <text evidence="1">Belongs to the EutC family.</text>
</comment>
<organism>
    <name type="scientific">Pseudomonas syringae pv. tomato (strain ATCC BAA-871 / DC3000)</name>
    <dbReference type="NCBI Taxonomy" id="223283"/>
    <lineage>
        <taxon>Bacteria</taxon>
        <taxon>Pseudomonadati</taxon>
        <taxon>Pseudomonadota</taxon>
        <taxon>Gammaproteobacteria</taxon>
        <taxon>Pseudomonadales</taxon>
        <taxon>Pseudomonadaceae</taxon>
        <taxon>Pseudomonas</taxon>
    </lineage>
</organism>